<sequence>MRYLTAGESHGLSLTAIIEGIPAGLTLHPADIDHELQRRQGGYGRGARMSIETDRVQISSGVRHGKTTGAPITLTVINKDHQKWLDVMAVGDIEETLKLKRRVKHPRPGHADLVGGIKYHFNDLRDALERSSARETTMRVAVGAVAKRILAELGIDMLHHILIFGGITITIPSKLSFRELQERALHSELSIVNPKQEEEIKTYIDKIKKEGDTIGGIIETIVQGVPAGLGSYVQWDKKLDAKLAQAVLSINAFKGVEFGVGFDMGFQKGSQVMDEITWTPTQGYGRQTNHLGGFEGGMTTGQPLVVKGVMKPIPTLYKPLMSVDIDSHEPYKATVERSDPTALPAAGVIMENVVATVLAKEILETFSSTTMSELQKAFSDYRAYVKQF</sequence>
<organism>
    <name type="scientific">Streptococcus pyogenes serotype M18 (strain MGAS8232)</name>
    <dbReference type="NCBI Taxonomy" id="186103"/>
    <lineage>
        <taxon>Bacteria</taxon>
        <taxon>Bacillati</taxon>
        <taxon>Bacillota</taxon>
        <taxon>Bacilli</taxon>
        <taxon>Lactobacillales</taxon>
        <taxon>Streptococcaceae</taxon>
        <taxon>Streptococcus</taxon>
    </lineage>
</organism>
<feature type="chain" id="PRO_0000140660" description="Chorismate synthase">
    <location>
        <begin position="1"/>
        <end position="388"/>
    </location>
</feature>
<feature type="binding site" evidence="1">
    <location>
        <position position="39"/>
    </location>
    <ligand>
        <name>NADP(+)</name>
        <dbReference type="ChEBI" id="CHEBI:58349"/>
    </ligand>
</feature>
<feature type="binding site" evidence="1">
    <location>
        <position position="45"/>
    </location>
    <ligand>
        <name>NADP(+)</name>
        <dbReference type="ChEBI" id="CHEBI:58349"/>
    </ligand>
</feature>
<feature type="binding site" evidence="1">
    <location>
        <begin position="130"/>
        <end position="132"/>
    </location>
    <ligand>
        <name>FMN</name>
        <dbReference type="ChEBI" id="CHEBI:58210"/>
    </ligand>
</feature>
<feature type="binding site" evidence="1">
    <location>
        <begin position="251"/>
        <end position="252"/>
    </location>
    <ligand>
        <name>FMN</name>
        <dbReference type="ChEBI" id="CHEBI:58210"/>
    </ligand>
</feature>
<feature type="binding site" evidence="1">
    <location>
        <position position="296"/>
    </location>
    <ligand>
        <name>FMN</name>
        <dbReference type="ChEBI" id="CHEBI:58210"/>
    </ligand>
</feature>
<feature type="binding site" evidence="1">
    <location>
        <begin position="311"/>
        <end position="315"/>
    </location>
    <ligand>
        <name>FMN</name>
        <dbReference type="ChEBI" id="CHEBI:58210"/>
    </ligand>
</feature>
<feature type="binding site" evidence="1">
    <location>
        <position position="337"/>
    </location>
    <ligand>
        <name>FMN</name>
        <dbReference type="ChEBI" id="CHEBI:58210"/>
    </ligand>
</feature>
<keyword id="KW-0028">Amino-acid biosynthesis</keyword>
<keyword id="KW-0057">Aromatic amino acid biosynthesis</keyword>
<keyword id="KW-0274">FAD</keyword>
<keyword id="KW-0285">Flavoprotein</keyword>
<keyword id="KW-0288">FMN</keyword>
<keyword id="KW-0456">Lyase</keyword>
<keyword id="KW-0521">NADP</keyword>
<protein>
    <recommendedName>
        <fullName evidence="1">Chorismate synthase</fullName>
        <shortName evidence="1">CS</shortName>
        <ecNumber evidence="1">4.2.3.5</ecNumber>
    </recommendedName>
    <alternativeName>
        <fullName evidence="1">5-enolpyruvylshikimate-3-phosphate phospholyase</fullName>
    </alternativeName>
</protein>
<comment type="function">
    <text evidence="1">Catalyzes the anti-1,4-elimination of the C-3 phosphate and the C-6 proR hydrogen from 5-enolpyruvylshikimate-3-phosphate (EPSP) to yield chorismate, which is the branch point compound that serves as the starting substrate for the three terminal pathways of aromatic amino acid biosynthesis. This reaction introduces a second double bond into the aromatic ring system.</text>
</comment>
<comment type="catalytic activity">
    <reaction evidence="1">
        <text>5-O-(1-carboxyvinyl)-3-phosphoshikimate = chorismate + phosphate</text>
        <dbReference type="Rhea" id="RHEA:21020"/>
        <dbReference type="ChEBI" id="CHEBI:29748"/>
        <dbReference type="ChEBI" id="CHEBI:43474"/>
        <dbReference type="ChEBI" id="CHEBI:57701"/>
        <dbReference type="EC" id="4.2.3.5"/>
    </reaction>
</comment>
<comment type="cofactor">
    <cofactor evidence="1">
        <name>FMNH2</name>
        <dbReference type="ChEBI" id="CHEBI:57618"/>
    </cofactor>
    <text evidence="1">Reduced FMN (FMNH(2)).</text>
</comment>
<comment type="pathway">
    <text evidence="1">Metabolic intermediate biosynthesis; chorismate biosynthesis; chorismate from D-erythrose 4-phosphate and phosphoenolpyruvate: step 7/7.</text>
</comment>
<comment type="subunit">
    <text evidence="1">Homotetramer.</text>
</comment>
<comment type="similarity">
    <text evidence="1">Belongs to the chorismate synthase family.</text>
</comment>
<proteinExistence type="inferred from homology"/>
<gene>
    <name evidence="1" type="primary">aroC</name>
    <name type="ordered locus">spyM18_0872</name>
</gene>
<dbReference type="EC" id="4.2.3.5" evidence="1"/>
<dbReference type="EMBL" id="AE009949">
    <property type="protein sequence ID" value="AAL97526.1"/>
    <property type="molecule type" value="Genomic_DNA"/>
</dbReference>
<dbReference type="RefSeq" id="WP_002992640.1">
    <property type="nucleotide sequence ID" value="NC_003485.1"/>
</dbReference>
<dbReference type="SMR" id="Q8P1H5"/>
<dbReference type="KEGG" id="spm:spyM18_0872"/>
<dbReference type="HOGENOM" id="CLU_034547_2_0_9"/>
<dbReference type="UniPathway" id="UPA00053">
    <property type="reaction ID" value="UER00090"/>
</dbReference>
<dbReference type="GO" id="GO:0005829">
    <property type="term" value="C:cytosol"/>
    <property type="evidence" value="ECO:0007669"/>
    <property type="project" value="TreeGrafter"/>
</dbReference>
<dbReference type="GO" id="GO:0004107">
    <property type="term" value="F:chorismate synthase activity"/>
    <property type="evidence" value="ECO:0007669"/>
    <property type="project" value="UniProtKB-UniRule"/>
</dbReference>
<dbReference type="GO" id="GO:0010181">
    <property type="term" value="F:FMN binding"/>
    <property type="evidence" value="ECO:0007669"/>
    <property type="project" value="TreeGrafter"/>
</dbReference>
<dbReference type="GO" id="GO:0008652">
    <property type="term" value="P:amino acid biosynthetic process"/>
    <property type="evidence" value="ECO:0007669"/>
    <property type="project" value="UniProtKB-KW"/>
</dbReference>
<dbReference type="GO" id="GO:0009073">
    <property type="term" value="P:aromatic amino acid family biosynthetic process"/>
    <property type="evidence" value="ECO:0007669"/>
    <property type="project" value="UniProtKB-KW"/>
</dbReference>
<dbReference type="GO" id="GO:0009423">
    <property type="term" value="P:chorismate biosynthetic process"/>
    <property type="evidence" value="ECO:0007669"/>
    <property type="project" value="UniProtKB-UniRule"/>
</dbReference>
<dbReference type="CDD" id="cd07304">
    <property type="entry name" value="Chorismate_synthase"/>
    <property type="match status" value="1"/>
</dbReference>
<dbReference type="FunFam" id="3.60.150.10:FF:000002">
    <property type="entry name" value="Chorismate synthase"/>
    <property type="match status" value="1"/>
</dbReference>
<dbReference type="Gene3D" id="3.60.150.10">
    <property type="entry name" value="Chorismate synthase AroC"/>
    <property type="match status" value="1"/>
</dbReference>
<dbReference type="HAMAP" id="MF_00300">
    <property type="entry name" value="Chorismate_synth"/>
    <property type="match status" value="1"/>
</dbReference>
<dbReference type="InterPro" id="IPR000453">
    <property type="entry name" value="Chorismate_synth"/>
</dbReference>
<dbReference type="InterPro" id="IPR035904">
    <property type="entry name" value="Chorismate_synth_AroC_sf"/>
</dbReference>
<dbReference type="InterPro" id="IPR020541">
    <property type="entry name" value="Chorismate_synthase_CS"/>
</dbReference>
<dbReference type="NCBIfam" id="TIGR00033">
    <property type="entry name" value="aroC"/>
    <property type="match status" value="1"/>
</dbReference>
<dbReference type="NCBIfam" id="NF003793">
    <property type="entry name" value="PRK05382.1"/>
    <property type="match status" value="1"/>
</dbReference>
<dbReference type="PANTHER" id="PTHR21085">
    <property type="entry name" value="CHORISMATE SYNTHASE"/>
    <property type="match status" value="1"/>
</dbReference>
<dbReference type="PANTHER" id="PTHR21085:SF0">
    <property type="entry name" value="CHORISMATE SYNTHASE"/>
    <property type="match status" value="1"/>
</dbReference>
<dbReference type="Pfam" id="PF01264">
    <property type="entry name" value="Chorismate_synt"/>
    <property type="match status" value="1"/>
</dbReference>
<dbReference type="PIRSF" id="PIRSF001456">
    <property type="entry name" value="Chorismate_synth"/>
    <property type="match status" value="1"/>
</dbReference>
<dbReference type="SUPFAM" id="SSF103263">
    <property type="entry name" value="Chorismate synthase, AroC"/>
    <property type="match status" value="1"/>
</dbReference>
<dbReference type="PROSITE" id="PS00787">
    <property type="entry name" value="CHORISMATE_SYNTHASE_1"/>
    <property type="match status" value="1"/>
</dbReference>
<dbReference type="PROSITE" id="PS00788">
    <property type="entry name" value="CHORISMATE_SYNTHASE_2"/>
    <property type="match status" value="1"/>
</dbReference>
<dbReference type="PROSITE" id="PS00789">
    <property type="entry name" value="CHORISMATE_SYNTHASE_3"/>
    <property type="match status" value="1"/>
</dbReference>
<accession>Q8P1H5</accession>
<name>AROC_STRP8</name>
<reference key="1">
    <citation type="journal article" date="2002" name="Proc. Natl. Acad. Sci. U.S.A.">
        <title>Genome sequence and comparative microarray analysis of serotype M18 group A Streptococcus strains associated with acute rheumatic fever outbreaks.</title>
        <authorList>
            <person name="Smoot J.C."/>
            <person name="Barbian K.D."/>
            <person name="Van Gompel J.J."/>
            <person name="Smoot L.M."/>
            <person name="Chaussee M.S."/>
            <person name="Sylva G.L."/>
            <person name="Sturdevant D.E."/>
            <person name="Ricklefs S.M."/>
            <person name="Porcella S.F."/>
            <person name="Parkins L.D."/>
            <person name="Beres S.B."/>
            <person name="Campbell D.S."/>
            <person name="Smith T.M."/>
            <person name="Zhang Q."/>
            <person name="Kapur V."/>
            <person name="Daly J.A."/>
            <person name="Veasy L.G."/>
            <person name="Musser J.M."/>
        </authorList>
    </citation>
    <scope>NUCLEOTIDE SEQUENCE [LARGE SCALE GENOMIC DNA]</scope>
    <source>
        <strain>MGAS8232</strain>
    </source>
</reference>
<evidence type="ECO:0000255" key="1">
    <source>
        <dbReference type="HAMAP-Rule" id="MF_00300"/>
    </source>
</evidence>